<reference key="1">
    <citation type="journal article" date="2008" name="PLoS ONE">
        <title>Genome sequence of the saprophyte Leptospira biflexa provides insights into the evolution of Leptospira and the pathogenesis of leptospirosis.</title>
        <authorList>
            <person name="Picardeau M."/>
            <person name="Bulach D.M."/>
            <person name="Bouchier C."/>
            <person name="Zuerner R.L."/>
            <person name="Zidane N."/>
            <person name="Wilson P.J."/>
            <person name="Creno S."/>
            <person name="Kuczek E.S."/>
            <person name="Bommezzadri S."/>
            <person name="Davis J.C."/>
            <person name="McGrath A."/>
            <person name="Johnson M.J."/>
            <person name="Boursaux-Eude C."/>
            <person name="Seemann T."/>
            <person name="Rouy Z."/>
            <person name="Coppel R.L."/>
            <person name="Rood J.I."/>
            <person name="Lajus A."/>
            <person name="Davies J.K."/>
            <person name="Medigue C."/>
            <person name="Adler B."/>
        </authorList>
    </citation>
    <scope>NUCLEOTIDE SEQUENCE [LARGE SCALE GENOMIC DNA]</scope>
    <source>
        <strain>Patoc 1 / ATCC 23582 / Paris</strain>
    </source>
</reference>
<feature type="chain" id="PRO_1000193619" description="Gamma-glutamyl phosphate reductase">
    <location>
        <begin position="1"/>
        <end position="421"/>
    </location>
</feature>
<gene>
    <name evidence="1" type="primary">proA</name>
    <name type="ordered locus">LEPBI_I1778</name>
</gene>
<protein>
    <recommendedName>
        <fullName evidence="1">Gamma-glutamyl phosphate reductase</fullName>
        <shortName evidence="1">GPR</shortName>
        <ecNumber evidence="1">1.2.1.41</ecNumber>
    </recommendedName>
    <alternativeName>
        <fullName evidence="1">Glutamate-5-semialdehyde dehydrogenase</fullName>
    </alternativeName>
    <alternativeName>
        <fullName evidence="1">Glutamyl-gamma-semialdehyde dehydrogenase</fullName>
        <shortName evidence="1">GSA dehydrogenase</shortName>
    </alternativeName>
</protein>
<sequence>MTFEATEYAKSIATKAKEASRALKSLTTLQKNSVLKRVETLLLENETAIIKENQIDLQNGIQKGLSSAMMDRLLLDSKRIQSMAKSIEEIRNLPDPVGEVVRGTILPNGLELLTKRVPIGVVMTIFESRPNVIVDIASLSFKSGNACILRGGSEAYHSNLILSSLFHQAIGESNLPSVTKDVVSFVENTDREAMVPFFQLDDLIDVIVPRGGEALIRFVSENSKIPVIKHDKGVTNLYLSNKAKEDIVLPILINSKVQRPGVCNALENLFIHKDYPHIQTLLSDLQKAGVQVLGDQSTQSIFPNLPLATEADFYTEFLDTRLSVKIVKSVEDAMQNIQNYSSGHTECILSEDESEIQTFRQGLDSAAIFVNCSTRFHDGGEFGLGAEVGISTGKLHVRGPMGLIHLTTTTTYVTGKGQVRG</sequence>
<proteinExistence type="inferred from homology"/>
<accession>B0SRT9</accession>
<evidence type="ECO:0000255" key="1">
    <source>
        <dbReference type="HAMAP-Rule" id="MF_00412"/>
    </source>
</evidence>
<comment type="function">
    <text evidence="1">Catalyzes the NADPH-dependent reduction of L-glutamate 5-phosphate into L-glutamate 5-semialdehyde and phosphate. The product spontaneously undergoes cyclization to form 1-pyrroline-5-carboxylate.</text>
</comment>
<comment type="catalytic activity">
    <reaction evidence="1">
        <text>L-glutamate 5-semialdehyde + phosphate + NADP(+) = L-glutamyl 5-phosphate + NADPH + H(+)</text>
        <dbReference type="Rhea" id="RHEA:19541"/>
        <dbReference type="ChEBI" id="CHEBI:15378"/>
        <dbReference type="ChEBI" id="CHEBI:43474"/>
        <dbReference type="ChEBI" id="CHEBI:57783"/>
        <dbReference type="ChEBI" id="CHEBI:58066"/>
        <dbReference type="ChEBI" id="CHEBI:58274"/>
        <dbReference type="ChEBI" id="CHEBI:58349"/>
        <dbReference type="EC" id="1.2.1.41"/>
    </reaction>
</comment>
<comment type="pathway">
    <text evidence="1">Amino-acid biosynthesis; L-proline biosynthesis; L-glutamate 5-semialdehyde from L-glutamate: step 2/2.</text>
</comment>
<comment type="subcellular location">
    <subcellularLocation>
        <location evidence="1">Cytoplasm</location>
    </subcellularLocation>
</comment>
<comment type="similarity">
    <text evidence="1">Belongs to the gamma-glutamyl phosphate reductase family.</text>
</comment>
<keyword id="KW-0028">Amino-acid biosynthesis</keyword>
<keyword id="KW-0963">Cytoplasm</keyword>
<keyword id="KW-0521">NADP</keyword>
<keyword id="KW-0560">Oxidoreductase</keyword>
<keyword id="KW-0641">Proline biosynthesis</keyword>
<keyword id="KW-1185">Reference proteome</keyword>
<name>PROA_LEPBP</name>
<organism>
    <name type="scientific">Leptospira biflexa serovar Patoc (strain Patoc 1 / ATCC 23582 / Paris)</name>
    <dbReference type="NCBI Taxonomy" id="456481"/>
    <lineage>
        <taxon>Bacteria</taxon>
        <taxon>Pseudomonadati</taxon>
        <taxon>Spirochaetota</taxon>
        <taxon>Spirochaetia</taxon>
        <taxon>Leptospirales</taxon>
        <taxon>Leptospiraceae</taxon>
        <taxon>Leptospira</taxon>
    </lineage>
</organism>
<dbReference type="EC" id="1.2.1.41" evidence="1"/>
<dbReference type="EMBL" id="CP000786">
    <property type="protein sequence ID" value="ABZ97884.1"/>
    <property type="molecule type" value="Genomic_DNA"/>
</dbReference>
<dbReference type="RefSeq" id="WP_012388762.1">
    <property type="nucleotide sequence ID" value="NC_010602.1"/>
</dbReference>
<dbReference type="SMR" id="B0SRT9"/>
<dbReference type="STRING" id="456481.LEPBI_I1778"/>
<dbReference type="KEGG" id="lbi:LEPBI_I1778"/>
<dbReference type="HOGENOM" id="CLU_030231_0_0_12"/>
<dbReference type="OrthoDB" id="9809970at2"/>
<dbReference type="BioCyc" id="LBIF456481:LEPBI_RS08785-MONOMER"/>
<dbReference type="UniPathway" id="UPA00098">
    <property type="reaction ID" value="UER00360"/>
</dbReference>
<dbReference type="Proteomes" id="UP000001847">
    <property type="component" value="Chromosome I"/>
</dbReference>
<dbReference type="GO" id="GO:0005737">
    <property type="term" value="C:cytoplasm"/>
    <property type="evidence" value="ECO:0007669"/>
    <property type="project" value="UniProtKB-SubCell"/>
</dbReference>
<dbReference type="GO" id="GO:0004350">
    <property type="term" value="F:glutamate-5-semialdehyde dehydrogenase activity"/>
    <property type="evidence" value="ECO:0007669"/>
    <property type="project" value="UniProtKB-UniRule"/>
</dbReference>
<dbReference type="GO" id="GO:0050661">
    <property type="term" value="F:NADP binding"/>
    <property type="evidence" value="ECO:0007669"/>
    <property type="project" value="InterPro"/>
</dbReference>
<dbReference type="GO" id="GO:0055129">
    <property type="term" value="P:L-proline biosynthetic process"/>
    <property type="evidence" value="ECO:0007669"/>
    <property type="project" value="UniProtKB-UniRule"/>
</dbReference>
<dbReference type="CDD" id="cd07079">
    <property type="entry name" value="ALDH_F18-19_ProA-GPR"/>
    <property type="match status" value="1"/>
</dbReference>
<dbReference type="Gene3D" id="3.40.605.10">
    <property type="entry name" value="Aldehyde Dehydrogenase, Chain A, domain 1"/>
    <property type="match status" value="1"/>
</dbReference>
<dbReference type="Gene3D" id="3.40.309.10">
    <property type="entry name" value="Aldehyde Dehydrogenase, Chain A, domain 2"/>
    <property type="match status" value="1"/>
</dbReference>
<dbReference type="HAMAP" id="MF_00412">
    <property type="entry name" value="ProA"/>
    <property type="match status" value="1"/>
</dbReference>
<dbReference type="InterPro" id="IPR016161">
    <property type="entry name" value="Ald_DH/histidinol_DH"/>
</dbReference>
<dbReference type="InterPro" id="IPR016163">
    <property type="entry name" value="Ald_DH_C"/>
</dbReference>
<dbReference type="InterPro" id="IPR016162">
    <property type="entry name" value="Ald_DH_N"/>
</dbReference>
<dbReference type="InterPro" id="IPR015590">
    <property type="entry name" value="Aldehyde_DH_dom"/>
</dbReference>
<dbReference type="InterPro" id="IPR012134">
    <property type="entry name" value="Glu-5-SA_DH"/>
</dbReference>
<dbReference type="InterPro" id="IPR000965">
    <property type="entry name" value="GPR_dom"/>
</dbReference>
<dbReference type="NCBIfam" id="NF001221">
    <property type="entry name" value="PRK00197.1"/>
    <property type="match status" value="1"/>
</dbReference>
<dbReference type="NCBIfam" id="TIGR00407">
    <property type="entry name" value="proA"/>
    <property type="match status" value="1"/>
</dbReference>
<dbReference type="PANTHER" id="PTHR11063:SF8">
    <property type="entry name" value="DELTA-1-PYRROLINE-5-CARBOXYLATE SYNTHASE"/>
    <property type="match status" value="1"/>
</dbReference>
<dbReference type="PANTHER" id="PTHR11063">
    <property type="entry name" value="GLUTAMATE SEMIALDEHYDE DEHYDROGENASE"/>
    <property type="match status" value="1"/>
</dbReference>
<dbReference type="Pfam" id="PF00171">
    <property type="entry name" value="Aldedh"/>
    <property type="match status" value="1"/>
</dbReference>
<dbReference type="PIRSF" id="PIRSF000151">
    <property type="entry name" value="GPR"/>
    <property type="match status" value="1"/>
</dbReference>
<dbReference type="SUPFAM" id="SSF53720">
    <property type="entry name" value="ALDH-like"/>
    <property type="match status" value="1"/>
</dbReference>